<gene>
    <name evidence="1" type="primary">leuC</name>
    <name type="ordered locus">Sbal_0388</name>
</gene>
<proteinExistence type="inferred from homology"/>
<keyword id="KW-0004">4Fe-4S</keyword>
<keyword id="KW-0028">Amino-acid biosynthesis</keyword>
<keyword id="KW-0100">Branched-chain amino acid biosynthesis</keyword>
<keyword id="KW-0408">Iron</keyword>
<keyword id="KW-0411">Iron-sulfur</keyword>
<keyword id="KW-0432">Leucine biosynthesis</keyword>
<keyword id="KW-0456">Lyase</keyword>
<keyword id="KW-0479">Metal-binding</keyword>
<keyword id="KW-1185">Reference proteome</keyword>
<sequence length="468" mass="49852">MTNAKTLYQKVWDAHIVASPEGEAPVIYVDRHLVHEVTSPQAFSGLKVAGRKLRAPEKTFATMDHNTSTRSASLDALSPMARTQVETLAQNCKDFGVRLYDIHHPNQGIVHVMGPELGITLPGTVIVCGDSHTATHGAFGALAFGIGTSEVEHVLATQTLRQLKAKTMKIEVRGHVTDGVTAKDIVLAIIGKIGMDGGTGYVVEFCGEAIEALSMEGRMTVCNMAIEMGAKAGMVAPDQTTFDYLAGREFAPKDEDWAEAVAYWKAIKTDDGAVFDAVVELDAADIAPQLTWGTNPGQVVAIDGKVPDPLNEANPSTRASMEKALEYIGLSAGTQMTDISINKVFIGSCTNSRIEDLRSAAVHAKGRKVASGVTAIVVPGSGQVKAQAEAEGLDKIFIEAGFEWRLPGCSMCLAMNDDRLEAGDRCASTSNRNFEGRQGRGSRTHLVSPAMAAAAAVAGHFVDIRKPY</sequence>
<dbReference type="EC" id="4.2.1.33" evidence="1"/>
<dbReference type="EMBL" id="CP000563">
    <property type="protein sequence ID" value="ABN59920.1"/>
    <property type="molecule type" value="Genomic_DNA"/>
</dbReference>
<dbReference type="RefSeq" id="WP_011845609.1">
    <property type="nucleotide sequence ID" value="NC_009052.1"/>
</dbReference>
<dbReference type="SMR" id="A3CZK7"/>
<dbReference type="STRING" id="325240.Sbal_0388"/>
<dbReference type="KEGG" id="sbl:Sbal_0388"/>
<dbReference type="HOGENOM" id="CLU_006714_3_4_6"/>
<dbReference type="OrthoDB" id="9802769at2"/>
<dbReference type="UniPathway" id="UPA00048">
    <property type="reaction ID" value="UER00071"/>
</dbReference>
<dbReference type="Proteomes" id="UP000001557">
    <property type="component" value="Chromosome"/>
</dbReference>
<dbReference type="GO" id="GO:0003861">
    <property type="term" value="F:3-isopropylmalate dehydratase activity"/>
    <property type="evidence" value="ECO:0007669"/>
    <property type="project" value="UniProtKB-UniRule"/>
</dbReference>
<dbReference type="GO" id="GO:0051539">
    <property type="term" value="F:4 iron, 4 sulfur cluster binding"/>
    <property type="evidence" value="ECO:0007669"/>
    <property type="project" value="UniProtKB-KW"/>
</dbReference>
<dbReference type="GO" id="GO:0046872">
    <property type="term" value="F:metal ion binding"/>
    <property type="evidence" value="ECO:0007669"/>
    <property type="project" value="UniProtKB-KW"/>
</dbReference>
<dbReference type="GO" id="GO:0009098">
    <property type="term" value="P:L-leucine biosynthetic process"/>
    <property type="evidence" value="ECO:0007669"/>
    <property type="project" value="UniProtKB-UniRule"/>
</dbReference>
<dbReference type="CDD" id="cd01583">
    <property type="entry name" value="IPMI"/>
    <property type="match status" value="1"/>
</dbReference>
<dbReference type="FunFam" id="3.30.499.10:FF:000006">
    <property type="entry name" value="3-isopropylmalate dehydratase large subunit"/>
    <property type="match status" value="1"/>
</dbReference>
<dbReference type="FunFam" id="3.30.499.10:FF:000007">
    <property type="entry name" value="3-isopropylmalate dehydratase large subunit"/>
    <property type="match status" value="1"/>
</dbReference>
<dbReference type="Gene3D" id="3.30.499.10">
    <property type="entry name" value="Aconitase, domain 3"/>
    <property type="match status" value="2"/>
</dbReference>
<dbReference type="HAMAP" id="MF_01026">
    <property type="entry name" value="LeuC_type1"/>
    <property type="match status" value="1"/>
</dbReference>
<dbReference type="InterPro" id="IPR004430">
    <property type="entry name" value="3-IsopropMal_deHydase_lsu"/>
</dbReference>
<dbReference type="InterPro" id="IPR015931">
    <property type="entry name" value="Acnase/IPM_dHydase_lsu_aba_1/3"/>
</dbReference>
<dbReference type="InterPro" id="IPR001030">
    <property type="entry name" value="Acoase/IPM_deHydtase_lsu_aba"/>
</dbReference>
<dbReference type="InterPro" id="IPR018136">
    <property type="entry name" value="Aconitase_4Fe-4S_BS"/>
</dbReference>
<dbReference type="InterPro" id="IPR036008">
    <property type="entry name" value="Aconitase_4Fe-4S_dom"/>
</dbReference>
<dbReference type="InterPro" id="IPR050067">
    <property type="entry name" value="IPM_dehydratase_rel_enz"/>
</dbReference>
<dbReference type="InterPro" id="IPR033941">
    <property type="entry name" value="IPMI_cat"/>
</dbReference>
<dbReference type="NCBIfam" id="TIGR00170">
    <property type="entry name" value="leuC"/>
    <property type="match status" value="1"/>
</dbReference>
<dbReference type="NCBIfam" id="NF004016">
    <property type="entry name" value="PRK05478.1"/>
    <property type="match status" value="1"/>
</dbReference>
<dbReference type="NCBIfam" id="NF009116">
    <property type="entry name" value="PRK12466.1"/>
    <property type="match status" value="1"/>
</dbReference>
<dbReference type="PANTHER" id="PTHR43822:SF9">
    <property type="entry name" value="3-ISOPROPYLMALATE DEHYDRATASE"/>
    <property type="match status" value="1"/>
</dbReference>
<dbReference type="PANTHER" id="PTHR43822">
    <property type="entry name" value="HOMOACONITASE, MITOCHONDRIAL-RELATED"/>
    <property type="match status" value="1"/>
</dbReference>
<dbReference type="Pfam" id="PF00330">
    <property type="entry name" value="Aconitase"/>
    <property type="match status" value="1"/>
</dbReference>
<dbReference type="PRINTS" id="PR00415">
    <property type="entry name" value="ACONITASE"/>
</dbReference>
<dbReference type="SUPFAM" id="SSF53732">
    <property type="entry name" value="Aconitase iron-sulfur domain"/>
    <property type="match status" value="1"/>
</dbReference>
<dbReference type="PROSITE" id="PS00450">
    <property type="entry name" value="ACONITASE_1"/>
    <property type="match status" value="1"/>
</dbReference>
<dbReference type="PROSITE" id="PS01244">
    <property type="entry name" value="ACONITASE_2"/>
    <property type="match status" value="1"/>
</dbReference>
<protein>
    <recommendedName>
        <fullName evidence="1">3-isopropylmalate dehydratase large subunit</fullName>
        <ecNumber evidence="1">4.2.1.33</ecNumber>
    </recommendedName>
    <alternativeName>
        <fullName evidence="1">Alpha-IPM isomerase</fullName>
        <shortName evidence="1">IPMI</shortName>
    </alternativeName>
    <alternativeName>
        <fullName evidence="1">Isopropylmalate isomerase</fullName>
    </alternativeName>
</protein>
<comment type="function">
    <text evidence="1">Catalyzes the isomerization between 2-isopropylmalate and 3-isopropylmalate, via the formation of 2-isopropylmaleate.</text>
</comment>
<comment type="catalytic activity">
    <reaction evidence="1">
        <text>(2R,3S)-3-isopropylmalate = (2S)-2-isopropylmalate</text>
        <dbReference type="Rhea" id="RHEA:32287"/>
        <dbReference type="ChEBI" id="CHEBI:1178"/>
        <dbReference type="ChEBI" id="CHEBI:35121"/>
        <dbReference type="EC" id="4.2.1.33"/>
    </reaction>
</comment>
<comment type="cofactor">
    <cofactor evidence="1">
        <name>[4Fe-4S] cluster</name>
        <dbReference type="ChEBI" id="CHEBI:49883"/>
    </cofactor>
    <text evidence="1">Binds 1 [4Fe-4S] cluster per subunit.</text>
</comment>
<comment type="pathway">
    <text evidence="1">Amino-acid biosynthesis; L-leucine biosynthesis; L-leucine from 3-methyl-2-oxobutanoate: step 2/4.</text>
</comment>
<comment type="subunit">
    <text evidence="1">Heterodimer of LeuC and LeuD.</text>
</comment>
<comment type="similarity">
    <text evidence="1">Belongs to the aconitase/IPM isomerase family. LeuC type 1 subfamily.</text>
</comment>
<name>LEUC_SHEB5</name>
<reference key="1">
    <citation type="submission" date="2007-02" db="EMBL/GenBank/DDBJ databases">
        <title>Complete sequence of chromosome of Shewanella baltica OS155.</title>
        <authorList>
            <consortium name="US DOE Joint Genome Institute"/>
            <person name="Copeland A."/>
            <person name="Lucas S."/>
            <person name="Lapidus A."/>
            <person name="Barry K."/>
            <person name="Detter J.C."/>
            <person name="Glavina del Rio T."/>
            <person name="Hammon N."/>
            <person name="Israni S."/>
            <person name="Dalin E."/>
            <person name="Tice H."/>
            <person name="Pitluck S."/>
            <person name="Sims D.R."/>
            <person name="Brettin T."/>
            <person name="Bruce D."/>
            <person name="Han C."/>
            <person name="Tapia R."/>
            <person name="Brainard J."/>
            <person name="Schmutz J."/>
            <person name="Larimer F."/>
            <person name="Land M."/>
            <person name="Hauser L."/>
            <person name="Kyrpides N."/>
            <person name="Mikhailova N."/>
            <person name="Brettar I."/>
            <person name="Klappenbach J."/>
            <person name="Konstantinidis K."/>
            <person name="Rodrigues J."/>
            <person name="Tiedje J."/>
            <person name="Richardson P."/>
        </authorList>
    </citation>
    <scope>NUCLEOTIDE SEQUENCE [LARGE SCALE GENOMIC DNA]</scope>
    <source>
        <strain>OS155 / ATCC BAA-1091</strain>
    </source>
</reference>
<feature type="chain" id="PRO_0000319838" description="3-isopropylmalate dehydratase large subunit">
    <location>
        <begin position="1"/>
        <end position="468"/>
    </location>
</feature>
<feature type="binding site" evidence="1">
    <location>
        <position position="349"/>
    </location>
    <ligand>
        <name>[4Fe-4S] cluster</name>
        <dbReference type="ChEBI" id="CHEBI:49883"/>
    </ligand>
</feature>
<feature type="binding site" evidence="1">
    <location>
        <position position="409"/>
    </location>
    <ligand>
        <name>[4Fe-4S] cluster</name>
        <dbReference type="ChEBI" id="CHEBI:49883"/>
    </ligand>
</feature>
<feature type="binding site" evidence="1">
    <location>
        <position position="412"/>
    </location>
    <ligand>
        <name>[4Fe-4S] cluster</name>
        <dbReference type="ChEBI" id="CHEBI:49883"/>
    </ligand>
</feature>
<evidence type="ECO:0000255" key="1">
    <source>
        <dbReference type="HAMAP-Rule" id="MF_01026"/>
    </source>
</evidence>
<organism>
    <name type="scientific">Shewanella baltica (strain OS155 / ATCC BAA-1091)</name>
    <dbReference type="NCBI Taxonomy" id="325240"/>
    <lineage>
        <taxon>Bacteria</taxon>
        <taxon>Pseudomonadati</taxon>
        <taxon>Pseudomonadota</taxon>
        <taxon>Gammaproteobacteria</taxon>
        <taxon>Alteromonadales</taxon>
        <taxon>Shewanellaceae</taxon>
        <taxon>Shewanella</taxon>
    </lineage>
</organism>
<accession>A3CZK7</accession>